<organism>
    <name type="scientific">Oryctolagus cuniculus</name>
    <name type="common">Rabbit</name>
    <dbReference type="NCBI Taxonomy" id="9986"/>
    <lineage>
        <taxon>Eukaryota</taxon>
        <taxon>Metazoa</taxon>
        <taxon>Chordata</taxon>
        <taxon>Craniata</taxon>
        <taxon>Vertebrata</taxon>
        <taxon>Euteleostomi</taxon>
        <taxon>Mammalia</taxon>
        <taxon>Eutheria</taxon>
        <taxon>Euarchontoglires</taxon>
        <taxon>Glires</taxon>
        <taxon>Lagomorpha</taxon>
        <taxon>Leporidae</taxon>
        <taxon>Oryctolagus</taxon>
    </lineage>
</organism>
<proteinExistence type="evidence at protein level"/>
<dbReference type="EC" id="3.2.1.28" evidence="4"/>
<dbReference type="EMBL" id="M55299">
    <property type="protein sequence ID" value="AAA63460.1"/>
    <property type="molecule type" value="mRNA"/>
</dbReference>
<dbReference type="PIR" id="A35810">
    <property type="entry name" value="A35810"/>
</dbReference>
<dbReference type="RefSeq" id="NP_001075759.1">
    <property type="nucleotide sequence ID" value="NM_001082290.1"/>
</dbReference>
<dbReference type="SMR" id="P19813"/>
<dbReference type="FunCoup" id="P19813">
    <property type="interactions" value="12"/>
</dbReference>
<dbReference type="STRING" id="9986.ENSOCUP00000008775"/>
<dbReference type="CAZy" id="GH37">
    <property type="family name" value="Glycoside Hydrolase Family 37"/>
</dbReference>
<dbReference type="GlyCosmos" id="P19813">
    <property type="glycosylation" value="3 sites, No reported glycans"/>
</dbReference>
<dbReference type="PaxDb" id="9986-ENSOCUP00000008775"/>
<dbReference type="GeneID" id="100009126"/>
<dbReference type="KEGG" id="ocu:100009126"/>
<dbReference type="CTD" id="11181"/>
<dbReference type="eggNOG" id="KOG0602">
    <property type="taxonomic scope" value="Eukaryota"/>
</dbReference>
<dbReference type="InParanoid" id="P19813"/>
<dbReference type="OrthoDB" id="3542292at2759"/>
<dbReference type="Proteomes" id="UP000001811">
    <property type="component" value="Unplaced"/>
</dbReference>
<dbReference type="GO" id="GO:0016020">
    <property type="term" value="C:membrane"/>
    <property type="evidence" value="ECO:0000314"/>
    <property type="project" value="UniProtKB"/>
</dbReference>
<dbReference type="GO" id="GO:0005886">
    <property type="term" value="C:plasma membrane"/>
    <property type="evidence" value="ECO:0000304"/>
    <property type="project" value="Reactome"/>
</dbReference>
<dbReference type="GO" id="GO:0098552">
    <property type="term" value="C:side of membrane"/>
    <property type="evidence" value="ECO:0007669"/>
    <property type="project" value="UniProtKB-KW"/>
</dbReference>
<dbReference type="GO" id="GO:0004555">
    <property type="term" value="F:alpha,alpha-trehalase activity"/>
    <property type="evidence" value="ECO:0000314"/>
    <property type="project" value="UniProtKB"/>
</dbReference>
<dbReference type="GO" id="GO:0005993">
    <property type="term" value="P:trehalose catabolic process"/>
    <property type="evidence" value="ECO:0000314"/>
    <property type="project" value="UniProtKB"/>
</dbReference>
<dbReference type="FunFam" id="1.50.10.10:FF:000034">
    <property type="entry name" value="Trehalase"/>
    <property type="match status" value="1"/>
</dbReference>
<dbReference type="Gene3D" id="1.50.10.10">
    <property type="match status" value="1"/>
</dbReference>
<dbReference type="InterPro" id="IPR008928">
    <property type="entry name" value="6-hairpin_glycosidase_sf"/>
</dbReference>
<dbReference type="InterPro" id="IPR012341">
    <property type="entry name" value="6hp_glycosidase-like_sf"/>
</dbReference>
<dbReference type="InterPro" id="IPR001661">
    <property type="entry name" value="Glyco_hydro_37"/>
</dbReference>
<dbReference type="InterPro" id="IPR018232">
    <property type="entry name" value="Glyco_hydro_37_CS"/>
</dbReference>
<dbReference type="PANTHER" id="PTHR23403">
    <property type="entry name" value="TREHALASE"/>
    <property type="match status" value="1"/>
</dbReference>
<dbReference type="PANTHER" id="PTHR23403:SF1">
    <property type="entry name" value="TREHALASE"/>
    <property type="match status" value="1"/>
</dbReference>
<dbReference type="Pfam" id="PF01204">
    <property type="entry name" value="Trehalase"/>
    <property type="match status" value="1"/>
</dbReference>
<dbReference type="PRINTS" id="PR00744">
    <property type="entry name" value="GLHYDRLASE37"/>
</dbReference>
<dbReference type="SUPFAM" id="SSF48208">
    <property type="entry name" value="Six-hairpin glycosidases"/>
    <property type="match status" value="1"/>
</dbReference>
<dbReference type="PROSITE" id="PS00927">
    <property type="entry name" value="TREHALASE_1"/>
    <property type="match status" value="1"/>
</dbReference>
<dbReference type="PROSITE" id="PS00928">
    <property type="entry name" value="TREHALASE_2"/>
    <property type="match status" value="1"/>
</dbReference>
<comment type="function">
    <text evidence="4">Intestinal trehalase is probably involved in the hydrolysis of ingested trehalose.</text>
</comment>
<comment type="catalytic activity">
    <reaction evidence="4">
        <text>alpha,alpha-trehalose + H2O = alpha-D-glucose + beta-D-glucose</text>
        <dbReference type="Rhea" id="RHEA:32675"/>
        <dbReference type="ChEBI" id="CHEBI:15377"/>
        <dbReference type="ChEBI" id="CHEBI:15903"/>
        <dbReference type="ChEBI" id="CHEBI:16551"/>
        <dbReference type="ChEBI" id="CHEBI:17925"/>
        <dbReference type="EC" id="3.2.1.28"/>
    </reaction>
</comment>
<comment type="subunit">
    <text evidence="4">Homodimer; disulfide-linked.</text>
</comment>
<comment type="subcellular location">
    <subcellularLocation>
        <location evidence="4">Cell membrane</location>
        <topology evidence="4">Lipid-anchor</topology>
        <topology evidence="4">GPI-anchor</topology>
    </subcellularLocation>
</comment>
<comment type="tissue specificity">
    <text evidence="4">Expressed in small intestine, kidney, and to a lesser extent in liver.</text>
</comment>
<comment type="similarity">
    <text evidence="6">Belongs to the glycosyl hydrolase 37 family.</text>
</comment>
<name>TREA_RABIT</name>
<feature type="signal peptide" evidence="2">
    <location>
        <begin position="1"/>
        <end position="19"/>
    </location>
</feature>
<feature type="chain" id="PRO_0000012055" description="Trehalase">
    <location>
        <begin position="20"/>
        <end position="555"/>
    </location>
</feature>
<feature type="propeptide" id="PRO_0000012056" description="Removed in mature form" evidence="2">
    <location>
        <begin position="556"/>
        <end position="578"/>
    </location>
</feature>
<feature type="active site" description="Proton donor/acceptor" evidence="1">
    <location>
        <position position="321"/>
    </location>
</feature>
<feature type="active site" description="Proton donor/acceptor" evidence="1">
    <location>
        <position position="514"/>
    </location>
</feature>
<feature type="binding site" evidence="1">
    <location>
        <position position="168"/>
    </location>
    <ligand>
        <name>substrate</name>
    </ligand>
</feature>
<feature type="binding site" evidence="1">
    <location>
        <begin position="175"/>
        <end position="176"/>
    </location>
    <ligand>
        <name>substrate</name>
    </ligand>
</feature>
<feature type="binding site" evidence="1">
    <location>
        <position position="212"/>
    </location>
    <ligand>
        <name>substrate</name>
    </ligand>
</feature>
<feature type="binding site" evidence="1">
    <location>
        <begin position="221"/>
        <end position="223"/>
    </location>
    <ligand>
        <name>substrate</name>
    </ligand>
</feature>
<feature type="binding site" evidence="1">
    <location>
        <begin position="286"/>
        <end position="288"/>
    </location>
    <ligand>
        <name>substrate</name>
    </ligand>
</feature>
<feature type="binding site" evidence="1">
    <location>
        <position position="319"/>
    </location>
    <ligand>
        <name>substrate</name>
    </ligand>
</feature>
<feature type="binding site" evidence="1">
    <location>
        <position position="528"/>
    </location>
    <ligand>
        <name>substrate</name>
    </ligand>
</feature>
<feature type="lipid moiety-binding region" description="GPI-anchor amidated serine" evidence="2">
    <location>
        <position position="555"/>
    </location>
</feature>
<feature type="glycosylation site" description="N-linked (GlcNAc...) asparagine" evidence="3">
    <location>
        <position position="78"/>
    </location>
</feature>
<feature type="glycosylation site" description="N-linked (GlcNAc...) asparagine" evidence="3">
    <location>
        <position position="261"/>
    </location>
</feature>
<feature type="glycosylation site" description="N-linked (GlcNAc...) asparagine" evidence="3">
    <location>
        <position position="369"/>
    </location>
</feature>
<keyword id="KW-1003">Cell membrane</keyword>
<keyword id="KW-0903">Direct protein sequencing</keyword>
<keyword id="KW-1015">Disulfide bond</keyword>
<keyword id="KW-0325">Glycoprotein</keyword>
<keyword id="KW-0326">Glycosidase</keyword>
<keyword id="KW-0336">GPI-anchor</keyword>
<keyword id="KW-0378">Hydrolase</keyword>
<keyword id="KW-0449">Lipoprotein</keyword>
<keyword id="KW-0472">Membrane</keyword>
<keyword id="KW-1185">Reference proteome</keyword>
<keyword id="KW-0732">Signal</keyword>
<sequence length="578" mass="65517">MPGSTWELHLLLLLGLGLGSEQALPPPCESQIYCHGELLHQVQMARLYPDDKQFVDMPLSTAPDQVLQSFAELAATYNNTVPREQLEKFVQEHFQAVGQELESWTPGDWKESPQFLQKISDPKLRAWAEQLHLLWKKLGKKIKPEVLSQPERFSLIYSQHPFIVPGGRFVEFYYWDSYWVMEGLLLSEMAETVKGMLQNFLDLVTAYGHIPNGGRVYYLQRSQPPLLTLMMDRYVAHTGDLAFLRENIETLALELDFWAENRTISVSSGGNSHTLNRYHVPYGGPRPESYSKDTELAHTLPEGSWETLWAELKAGAESGWDFSSRWLVGSPNPDSLGSIRTSKLVPVDLNAFLCQAEELLSGFYSRLGNESQATKYRNLRAQRIAALTALLWDEDKGAWFDYDLENQKKNHEFYPSNLTPLWAGCFSDPAIADKALQYLQDSQILNHRHGIPTSLQNTGQQWDFPNAWAPLQDLVIRGLAKSPSARTQEVAFQLAQNWIRTNFDVYSQRSAMYEKYDISNAQPGGGGEYEVQEGFGWTNGVALMLLDRYGDRLSSGTQLALLEPHCLAAALLLSFLTR</sequence>
<protein>
    <recommendedName>
        <fullName evidence="5">Trehalase</fullName>
        <ecNumber evidence="4">3.2.1.28</ecNumber>
    </recommendedName>
    <alternativeName>
        <fullName>Alpha,alpha-trehalase</fullName>
    </alternativeName>
    <alternativeName>
        <fullName>Alpha,alpha-trehalose glucohydrolase</fullName>
    </alternativeName>
</protein>
<reference key="1">
    <citation type="journal article" date="1990" name="J. Biol. Chem.">
        <title>Rabbit small intestinal trehalase. Purification, cDNA cloning, expression, and verification of glycosylphosphatidylinositol anchoring.</title>
        <authorList>
            <person name="Ruf J."/>
            <person name="Wacker H."/>
            <person name="James P."/>
            <person name="Maffia M."/>
            <person name="Seiler P."/>
            <person name="Galand G."/>
            <person name="von Kieckebusch A."/>
            <person name="Semenza G."/>
            <person name="Mantei N."/>
        </authorList>
    </citation>
    <scope>NUCLEOTIDE SEQUENCE [MRNA]</scope>
    <scope>PARTIAL PROTEIN SEQUENCE</scope>
    <scope>FUNCTION</scope>
    <scope>CATALYTIC ACTIVITY</scope>
    <scope>SUBUNIT</scope>
    <scope>SUBCELLULAR LOCATION</scope>
    <scope>TOPOLOGY</scope>
    <scope>TISSUE SPECIFICITY</scope>
    <source>
        <strain>New Zealand white</strain>
    </source>
</reference>
<evidence type="ECO:0000250" key="1">
    <source>
        <dbReference type="UniProtKB" id="P13482"/>
    </source>
</evidence>
<evidence type="ECO:0000255" key="2"/>
<evidence type="ECO:0000255" key="3">
    <source>
        <dbReference type="PROSITE-ProRule" id="PRU00498"/>
    </source>
</evidence>
<evidence type="ECO:0000269" key="4">
    <source>
    </source>
</evidence>
<evidence type="ECO:0000303" key="5">
    <source>
    </source>
</evidence>
<evidence type="ECO:0000305" key="6"/>
<accession>P19813</accession>
<gene>
    <name type="primary">TREH</name>
    <name type="synonym">TREA</name>
</gene>